<proteinExistence type="inferred from homology"/>
<dbReference type="EMBL" id="L23385">
    <property type="protein sequence ID" value="AAC37693.1"/>
    <property type="molecule type" value="Genomic_DNA"/>
</dbReference>
<dbReference type="EMBL" id="L23374">
    <property type="protein sequence ID" value="AAA31928.1"/>
    <property type="molecule type" value="Genomic_DNA"/>
</dbReference>
<dbReference type="EMBL" id="L23376">
    <property type="protein sequence ID" value="AAA31930.1"/>
    <property type="molecule type" value="Genomic_DNA"/>
</dbReference>
<dbReference type="EMBL" id="L23384">
    <property type="protein sequence ID" value="AAA31937.1"/>
    <property type="molecule type" value="Genomic_DNA"/>
</dbReference>
<dbReference type="EMBL" id="L23390">
    <property type="protein sequence ID" value="AAA31940.1"/>
    <property type="molecule type" value="Genomic_DNA"/>
</dbReference>
<dbReference type="EMBL" id="L23397">
    <property type="protein sequence ID" value="AAA31945.1"/>
    <property type="molecule type" value="Genomic_DNA"/>
</dbReference>
<dbReference type="PIR" id="I49399">
    <property type="entry name" value="I49399"/>
</dbReference>
<dbReference type="SMR" id="Q35000"/>
<dbReference type="GO" id="GO:0005743">
    <property type="term" value="C:mitochondrial inner membrane"/>
    <property type="evidence" value="ECO:0007669"/>
    <property type="project" value="UniProtKB-SubCell"/>
</dbReference>
<dbReference type="GO" id="GO:0045275">
    <property type="term" value="C:respiratory chain complex III"/>
    <property type="evidence" value="ECO:0007669"/>
    <property type="project" value="InterPro"/>
</dbReference>
<dbReference type="GO" id="GO:0046872">
    <property type="term" value="F:metal ion binding"/>
    <property type="evidence" value="ECO:0007669"/>
    <property type="project" value="UniProtKB-KW"/>
</dbReference>
<dbReference type="GO" id="GO:0008121">
    <property type="term" value="F:ubiquinol-cytochrome-c reductase activity"/>
    <property type="evidence" value="ECO:0007669"/>
    <property type="project" value="InterPro"/>
</dbReference>
<dbReference type="GO" id="GO:0006122">
    <property type="term" value="P:mitochondrial electron transport, ubiquinol to cytochrome c"/>
    <property type="evidence" value="ECO:0007669"/>
    <property type="project" value="TreeGrafter"/>
</dbReference>
<dbReference type="CDD" id="cd00290">
    <property type="entry name" value="cytochrome_b_C"/>
    <property type="match status" value="1"/>
</dbReference>
<dbReference type="CDD" id="cd00284">
    <property type="entry name" value="Cytochrome_b_N"/>
    <property type="match status" value="1"/>
</dbReference>
<dbReference type="FunFam" id="1.20.810.10:FF:000002">
    <property type="entry name" value="Cytochrome b"/>
    <property type="match status" value="1"/>
</dbReference>
<dbReference type="Gene3D" id="1.20.810.10">
    <property type="entry name" value="Cytochrome Bc1 Complex, Chain C"/>
    <property type="match status" value="1"/>
</dbReference>
<dbReference type="InterPro" id="IPR005798">
    <property type="entry name" value="Cyt_b/b6_C"/>
</dbReference>
<dbReference type="InterPro" id="IPR036150">
    <property type="entry name" value="Cyt_b/b6_C_sf"/>
</dbReference>
<dbReference type="InterPro" id="IPR005797">
    <property type="entry name" value="Cyt_b/b6_N"/>
</dbReference>
<dbReference type="InterPro" id="IPR027387">
    <property type="entry name" value="Cytb/b6-like_sf"/>
</dbReference>
<dbReference type="InterPro" id="IPR030689">
    <property type="entry name" value="Cytochrome_b"/>
</dbReference>
<dbReference type="InterPro" id="IPR048260">
    <property type="entry name" value="Cytochrome_b_C_euk/bac"/>
</dbReference>
<dbReference type="InterPro" id="IPR048259">
    <property type="entry name" value="Cytochrome_b_N_euk/bac"/>
</dbReference>
<dbReference type="InterPro" id="IPR016174">
    <property type="entry name" value="Di-haem_cyt_TM"/>
</dbReference>
<dbReference type="PANTHER" id="PTHR19271">
    <property type="entry name" value="CYTOCHROME B"/>
    <property type="match status" value="1"/>
</dbReference>
<dbReference type="PANTHER" id="PTHR19271:SF16">
    <property type="entry name" value="CYTOCHROME B"/>
    <property type="match status" value="1"/>
</dbReference>
<dbReference type="Pfam" id="PF00032">
    <property type="entry name" value="Cytochrom_B_C"/>
    <property type="match status" value="1"/>
</dbReference>
<dbReference type="Pfam" id="PF00033">
    <property type="entry name" value="Cytochrome_B"/>
    <property type="match status" value="1"/>
</dbReference>
<dbReference type="PIRSF" id="PIRSF038885">
    <property type="entry name" value="COB"/>
    <property type="match status" value="1"/>
</dbReference>
<dbReference type="SUPFAM" id="SSF81648">
    <property type="entry name" value="a domain/subunit of cytochrome bc1 complex (Ubiquinol-cytochrome c reductase)"/>
    <property type="match status" value="1"/>
</dbReference>
<dbReference type="SUPFAM" id="SSF81342">
    <property type="entry name" value="Transmembrane di-heme cytochromes"/>
    <property type="match status" value="1"/>
</dbReference>
<dbReference type="PROSITE" id="PS51003">
    <property type="entry name" value="CYTB_CTER"/>
    <property type="match status" value="1"/>
</dbReference>
<dbReference type="PROSITE" id="PS51002">
    <property type="entry name" value="CYTB_NTER"/>
    <property type="match status" value="1"/>
</dbReference>
<gene>
    <name type="primary">MT-CYB</name>
    <name type="synonym">COB</name>
    <name type="synonym">CYTB</name>
    <name type="synonym">MTCYB</name>
</gene>
<feature type="chain" id="PRO_0000061171" description="Cytochrome b">
    <location>
        <begin position="1"/>
        <end position="379"/>
    </location>
</feature>
<feature type="transmembrane region" description="Helical" evidence="2">
    <location>
        <begin position="33"/>
        <end position="53"/>
    </location>
</feature>
<feature type="transmembrane region" description="Helical" evidence="2">
    <location>
        <begin position="77"/>
        <end position="98"/>
    </location>
</feature>
<feature type="transmembrane region" description="Helical" evidence="2">
    <location>
        <begin position="113"/>
        <end position="133"/>
    </location>
</feature>
<feature type="transmembrane region" description="Helical" evidence="2">
    <location>
        <begin position="178"/>
        <end position="198"/>
    </location>
</feature>
<feature type="transmembrane region" description="Helical" evidence="2">
    <location>
        <begin position="226"/>
        <end position="246"/>
    </location>
</feature>
<feature type="transmembrane region" description="Helical" evidence="2">
    <location>
        <begin position="288"/>
        <end position="308"/>
    </location>
</feature>
<feature type="transmembrane region" description="Helical" evidence="2">
    <location>
        <begin position="320"/>
        <end position="340"/>
    </location>
</feature>
<feature type="transmembrane region" description="Helical" evidence="2">
    <location>
        <begin position="347"/>
        <end position="367"/>
    </location>
</feature>
<feature type="binding site" description="axial binding residue" evidence="2">
    <location>
        <position position="83"/>
    </location>
    <ligand>
        <name>heme b</name>
        <dbReference type="ChEBI" id="CHEBI:60344"/>
        <label>b562</label>
    </ligand>
    <ligandPart>
        <name>Fe</name>
        <dbReference type="ChEBI" id="CHEBI:18248"/>
    </ligandPart>
</feature>
<feature type="binding site" description="axial binding residue" evidence="2">
    <location>
        <position position="97"/>
    </location>
    <ligand>
        <name>heme b</name>
        <dbReference type="ChEBI" id="CHEBI:60344"/>
        <label>b566</label>
    </ligand>
    <ligandPart>
        <name>Fe</name>
        <dbReference type="ChEBI" id="CHEBI:18248"/>
    </ligandPart>
</feature>
<feature type="binding site" description="axial binding residue" evidence="2">
    <location>
        <position position="182"/>
    </location>
    <ligand>
        <name>heme b</name>
        <dbReference type="ChEBI" id="CHEBI:60344"/>
        <label>b562</label>
    </ligand>
    <ligandPart>
        <name>Fe</name>
        <dbReference type="ChEBI" id="CHEBI:18248"/>
    </ligandPart>
</feature>
<feature type="binding site" description="axial binding residue" evidence="2">
    <location>
        <position position="196"/>
    </location>
    <ligand>
        <name>heme b</name>
        <dbReference type="ChEBI" id="CHEBI:60344"/>
        <label>b566</label>
    </ligand>
    <ligandPart>
        <name>Fe</name>
        <dbReference type="ChEBI" id="CHEBI:18248"/>
    </ligandPart>
</feature>
<feature type="binding site" evidence="2">
    <location>
        <position position="201"/>
    </location>
    <ligand>
        <name>a ubiquinone</name>
        <dbReference type="ChEBI" id="CHEBI:16389"/>
    </ligand>
</feature>
<feature type="sequence variant" description="In strain: Isolate MNFS 436.">
    <original>F</original>
    <variation>L</variation>
    <location>
        <position position="109"/>
    </location>
</feature>
<feature type="sequence variant" description="In strain: Isolate MNFS 436.">
    <original>A</original>
    <variation>T</variation>
    <location>
        <position position="238"/>
    </location>
</feature>
<protein>
    <recommendedName>
        <fullName>Cytochrome b</fullName>
    </recommendedName>
    <alternativeName>
        <fullName>Complex III subunit 3</fullName>
    </alternativeName>
    <alternativeName>
        <fullName>Complex III subunit III</fullName>
    </alternativeName>
    <alternativeName>
        <fullName>Cytochrome b-c1 complex subunit 3</fullName>
    </alternativeName>
    <alternativeName>
        <fullName>Ubiquinol-cytochrome-c reductase complex cytochrome b subunit</fullName>
    </alternativeName>
</protein>
<comment type="function">
    <text evidence="2">Component of the ubiquinol-cytochrome c reductase complex (complex III or cytochrome b-c1 complex) that is part of the mitochondrial respiratory chain. The b-c1 complex mediates electron transfer from ubiquinol to cytochrome c. Contributes to the generation of a proton gradient across the mitochondrial membrane that is then used for ATP synthesis.</text>
</comment>
<comment type="cofactor">
    <cofactor evidence="2">
        <name>heme b</name>
        <dbReference type="ChEBI" id="CHEBI:60344"/>
    </cofactor>
    <text evidence="2">Binds 2 heme b groups non-covalently.</text>
</comment>
<comment type="subunit">
    <text evidence="2">The cytochrome bc1 complex contains 11 subunits: 3 respiratory subunits (MT-CYB, CYC1 and UQCRFS1), 2 core proteins (UQCRC1 and UQCRC2) and 6 low-molecular weight proteins (UQCRH/QCR6, UQCRB/QCR7, UQCRQ/QCR8, UQCR10/QCR9, UQCR11/QCR10 and a cleavage product of UQCRFS1). This cytochrome bc1 complex then forms a dimer.</text>
</comment>
<comment type="subcellular location">
    <subcellularLocation>
        <location evidence="2">Mitochondrion inner membrane</location>
        <topology evidence="2">Multi-pass membrane protein</topology>
    </subcellularLocation>
</comment>
<comment type="miscellaneous">
    <text evidence="1">Heme 1 (or BL or b562) is low-potential and absorbs at about 562 nm, and heme 2 (or BH or b566) is high-potential and absorbs at about 566 nm.</text>
</comment>
<comment type="similarity">
    <text evidence="3 4">Belongs to the cytochrome b family.</text>
</comment>
<comment type="caution">
    <text evidence="2">The full-length protein contains only eight transmembrane helices, not nine as predicted by bioinformatics tools.</text>
</comment>
<sequence length="379" mass="42790">MTNIRKSHPLAKIINHSFIDLPAPSNISAWWNFGSLLGVCLALQIITGLFLAMHYTADTTTAFSSVTHICRDVNYGWLIRYAHANGASMFFIFLYFHIGRGIYYGSYTFMETWNIGVILLFAVMATAFMGYVLPWGQMSFWGATVITNLLSAIPYIGTSLVEWIWGGFSVDKATLTRFFAFHFILPFIITAMVAIHLLFLHETGSNNPSGLTSDSDKIPFHPYYTIKDILGLLFMLLALMMLILFSPDLLGDPDNYTPANPLNTPPHIKPEWYFLFAYAILRSIPNKLGGVLALVFSILILMLFPSLHMSKQRSMSFRPLSQCLLWILVANLIILTWIGGQPVEYPFISIGQMASISYFCIILILMPATSLMENKMLKW</sequence>
<organism>
    <name type="scientific">Mesomys hispidus</name>
    <name type="common">Spiny tree rat</name>
    <dbReference type="NCBI Taxonomy" id="30627"/>
    <lineage>
        <taxon>Eukaryota</taxon>
        <taxon>Metazoa</taxon>
        <taxon>Chordata</taxon>
        <taxon>Craniata</taxon>
        <taxon>Vertebrata</taxon>
        <taxon>Euteleostomi</taxon>
        <taxon>Mammalia</taxon>
        <taxon>Eutheria</taxon>
        <taxon>Euarchontoglires</taxon>
        <taxon>Glires</taxon>
        <taxon>Rodentia</taxon>
        <taxon>Hystricomorpha</taxon>
        <taxon>Echimyidae</taxon>
        <taxon>Mesomys</taxon>
    </lineage>
</organism>
<reference key="1">
    <citation type="journal article" date="1996" name="Mol. Phylogenet. Evol.">
        <title>The simultaneous diversification of South American echimyid rodents (Hystricognathi) based on complete cytochrome b sequences.</title>
        <authorList>
            <person name="Lara M.C."/>
            <person name="Patton J.L."/>
            <person name="da Silva M.N.F."/>
        </authorList>
    </citation>
    <scope>NUCLEOTIDE SEQUENCE [GENOMIC DNA]</scope>
    <source>
        <strain>Isolate MNFS 436</strain>
    </source>
</reference>
<reference key="2">
    <citation type="journal article" date="1993" name="Mol. Phylogenet. Evol.">
        <title>Amazonian phylogeography: mtDNA sequence variation in arboreal echimyid rodents (Caviomorpha).</title>
        <authorList>
            <person name="da Silva M.N.F."/>
            <person name="Patton J.L."/>
        </authorList>
    </citation>
    <scope>NUCLEOTIDE SEQUENCE [GENOMIC DNA] OF 1-266</scope>
    <source>
        <strain>Isolate JLP 15708</strain>
        <strain>Isolate JLP 15852</strain>
        <strain>Isolate LP 15651</strain>
        <strain>Isolate MNFS 432</strain>
        <strain>Isolate MNFS 564</strain>
    </source>
</reference>
<evidence type="ECO:0000250" key="1"/>
<evidence type="ECO:0000250" key="2">
    <source>
        <dbReference type="UniProtKB" id="P00157"/>
    </source>
</evidence>
<evidence type="ECO:0000255" key="3">
    <source>
        <dbReference type="PROSITE-ProRule" id="PRU00967"/>
    </source>
</evidence>
<evidence type="ECO:0000255" key="4">
    <source>
        <dbReference type="PROSITE-ProRule" id="PRU00968"/>
    </source>
</evidence>
<accession>Q35000</accession>
<accession>Q35003</accession>
<accession>Q36992</accession>
<keyword id="KW-0249">Electron transport</keyword>
<keyword id="KW-0349">Heme</keyword>
<keyword id="KW-0408">Iron</keyword>
<keyword id="KW-0472">Membrane</keyword>
<keyword id="KW-0479">Metal-binding</keyword>
<keyword id="KW-0496">Mitochondrion</keyword>
<keyword id="KW-0999">Mitochondrion inner membrane</keyword>
<keyword id="KW-0679">Respiratory chain</keyword>
<keyword id="KW-0812">Transmembrane</keyword>
<keyword id="KW-1133">Transmembrane helix</keyword>
<keyword id="KW-0813">Transport</keyword>
<keyword id="KW-0830">Ubiquinone</keyword>
<geneLocation type="mitochondrion"/>
<name>CYB_MESHI</name>